<gene>
    <name evidence="1" type="primary">rlmH</name>
    <name type="ordered locus">Lferr_2563</name>
</gene>
<sequence>MRLWVLAIGSKMPAWVEAGVAEYSARMPPQLRVEWRGLPLARRGRSGDPVRWRREEGERILAATPAGAERIALEVNGRNLDSEALAQRIDTWFHSGRDVALWVGGPDGLDPALQPDWRWSLSPLTLAHPVVRVVLAEQLYRAWSIQAGLPYHRGGEE</sequence>
<name>RLMH_ACIF5</name>
<protein>
    <recommendedName>
        <fullName evidence="1">Ribosomal RNA large subunit methyltransferase H</fullName>
        <ecNumber evidence="1">2.1.1.177</ecNumber>
    </recommendedName>
    <alternativeName>
        <fullName evidence="1">23S rRNA (pseudouridine1915-N3)-methyltransferase</fullName>
    </alternativeName>
    <alternativeName>
        <fullName evidence="1">23S rRNA m3Psi1915 methyltransferase</fullName>
    </alternativeName>
    <alternativeName>
        <fullName evidence="1">rRNA (pseudouridine-N3-)-methyltransferase RlmH</fullName>
    </alternativeName>
</protein>
<feature type="chain" id="PRO_0000366549" description="Ribosomal RNA large subunit methyltransferase H">
    <location>
        <begin position="1"/>
        <end position="157"/>
    </location>
</feature>
<feature type="binding site" evidence="1">
    <location>
        <position position="73"/>
    </location>
    <ligand>
        <name>S-adenosyl-L-methionine</name>
        <dbReference type="ChEBI" id="CHEBI:59789"/>
    </ligand>
</feature>
<feature type="binding site" evidence="1">
    <location>
        <position position="104"/>
    </location>
    <ligand>
        <name>S-adenosyl-L-methionine</name>
        <dbReference type="ChEBI" id="CHEBI:59789"/>
    </ligand>
</feature>
<feature type="binding site" evidence="1">
    <location>
        <begin position="121"/>
        <end position="126"/>
    </location>
    <ligand>
        <name>S-adenosyl-L-methionine</name>
        <dbReference type="ChEBI" id="CHEBI:59789"/>
    </ligand>
</feature>
<dbReference type="EC" id="2.1.1.177" evidence="1"/>
<dbReference type="EMBL" id="CP001132">
    <property type="protein sequence ID" value="ACH84757.1"/>
    <property type="molecule type" value="Genomic_DNA"/>
</dbReference>
<dbReference type="RefSeq" id="WP_009560842.1">
    <property type="nucleotide sequence ID" value="NC_011206.1"/>
</dbReference>
<dbReference type="SMR" id="B5EPW2"/>
<dbReference type="GeneID" id="65281963"/>
<dbReference type="KEGG" id="afe:Lferr_2563"/>
<dbReference type="eggNOG" id="COG1576">
    <property type="taxonomic scope" value="Bacteria"/>
</dbReference>
<dbReference type="HOGENOM" id="CLU_100552_1_0_6"/>
<dbReference type="GO" id="GO:0005737">
    <property type="term" value="C:cytoplasm"/>
    <property type="evidence" value="ECO:0007669"/>
    <property type="project" value="UniProtKB-SubCell"/>
</dbReference>
<dbReference type="GO" id="GO:0070038">
    <property type="term" value="F:rRNA (pseudouridine-N3-)-methyltransferase activity"/>
    <property type="evidence" value="ECO:0007669"/>
    <property type="project" value="UniProtKB-UniRule"/>
</dbReference>
<dbReference type="CDD" id="cd18081">
    <property type="entry name" value="RlmH-like"/>
    <property type="match status" value="1"/>
</dbReference>
<dbReference type="Gene3D" id="3.40.1280.10">
    <property type="match status" value="1"/>
</dbReference>
<dbReference type="HAMAP" id="MF_00658">
    <property type="entry name" value="23SrRNA_methyltr_H"/>
    <property type="match status" value="1"/>
</dbReference>
<dbReference type="InterPro" id="IPR029028">
    <property type="entry name" value="Alpha/beta_knot_MTases"/>
</dbReference>
<dbReference type="InterPro" id="IPR003742">
    <property type="entry name" value="RlmH-like"/>
</dbReference>
<dbReference type="InterPro" id="IPR029026">
    <property type="entry name" value="tRNA_m1G_MTases_N"/>
</dbReference>
<dbReference type="NCBIfam" id="NF000986">
    <property type="entry name" value="PRK00103.1-4"/>
    <property type="match status" value="1"/>
</dbReference>
<dbReference type="PANTHER" id="PTHR33603">
    <property type="entry name" value="METHYLTRANSFERASE"/>
    <property type="match status" value="1"/>
</dbReference>
<dbReference type="PANTHER" id="PTHR33603:SF1">
    <property type="entry name" value="RIBOSOMAL RNA LARGE SUBUNIT METHYLTRANSFERASE H"/>
    <property type="match status" value="1"/>
</dbReference>
<dbReference type="Pfam" id="PF02590">
    <property type="entry name" value="SPOUT_MTase"/>
    <property type="match status" value="1"/>
</dbReference>
<dbReference type="PIRSF" id="PIRSF004505">
    <property type="entry name" value="MT_bac"/>
    <property type="match status" value="1"/>
</dbReference>
<dbReference type="SUPFAM" id="SSF75217">
    <property type="entry name" value="alpha/beta knot"/>
    <property type="match status" value="1"/>
</dbReference>
<evidence type="ECO:0000255" key="1">
    <source>
        <dbReference type="HAMAP-Rule" id="MF_00658"/>
    </source>
</evidence>
<accession>B5EPW2</accession>
<keyword id="KW-0963">Cytoplasm</keyword>
<keyword id="KW-0489">Methyltransferase</keyword>
<keyword id="KW-0698">rRNA processing</keyword>
<keyword id="KW-0949">S-adenosyl-L-methionine</keyword>
<keyword id="KW-0808">Transferase</keyword>
<proteinExistence type="inferred from homology"/>
<organism>
    <name type="scientific">Acidithiobacillus ferrooxidans (strain ATCC 53993 / BNL-5-31)</name>
    <name type="common">Leptospirillum ferrooxidans (ATCC 53993)</name>
    <dbReference type="NCBI Taxonomy" id="380394"/>
    <lineage>
        <taxon>Bacteria</taxon>
        <taxon>Pseudomonadati</taxon>
        <taxon>Pseudomonadota</taxon>
        <taxon>Acidithiobacillia</taxon>
        <taxon>Acidithiobacillales</taxon>
        <taxon>Acidithiobacillaceae</taxon>
        <taxon>Acidithiobacillus</taxon>
    </lineage>
</organism>
<reference key="1">
    <citation type="submission" date="2008-08" db="EMBL/GenBank/DDBJ databases">
        <title>Complete sequence of Acidithiobacillus ferrooxidans ATCC 53993.</title>
        <authorList>
            <person name="Lucas S."/>
            <person name="Copeland A."/>
            <person name="Lapidus A."/>
            <person name="Glavina del Rio T."/>
            <person name="Dalin E."/>
            <person name="Tice H."/>
            <person name="Bruce D."/>
            <person name="Goodwin L."/>
            <person name="Pitluck S."/>
            <person name="Sims D."/>
            <person name="Brettin T."/>
            <person name="Detter J.C."/>
            <person name="Han C."/>
            <person name="Kuske C.R."/>
            <person name="Larimer F."/>
            <person name="Land M."/>
            <person name="Hauser L."/>
            <person name="Kyrpides N."/>
            <person name="Lykidis A."/>
            <person name="Borole A.P."/>
        </authorList>
    </citation>
    <scope>NUCLEOTIDE SEQUENCE [LARGE SCALE GENOMIC DNA]</scope>
    <source>
        <strain>ATCC 53993 / BNL-5-31</strain>
    </source>
</reference>
<comment type="function">
    <text evidence="1">Specifically methylates the pseudouridine at position 1915 (m3Psi1915) in 23S rRNA.</text>
</comment>
<comment type="catalytic activity">
    <reaction evidence="1">
        <text>pseudouridine(1915) in 23S rRNA + S-adenosyl-L-methionine = N(3)-methylpseudouridine(1915) in 23S rRNA + S-adenosyl-L-homocysteine + H(+)</text>
        <dbReference type="Rhea" id="RHEA:42752"/>
        <dbReference type="Rhea" id="RHEA-COMP:10221"/>
        <dbReference type="Rhea" id="RHEA-COMP:10222"/>
        <dbReference type="ChEBI" id="CHEBI:15378"/>
        <dbReference type="ChEBI" id="CHEBI:57856"/>
        <dbReference type="ChEBI" id="CHEBI:59789"/>
        <dbReference type="ChEBI" id="CHEBI:65314"/>
        <dbReference type="ChEBI" id="CHEBI:74486"/>
        <dbReference type="EC" id="2.1.1.177"/>
    </reaction>
</comment>
<comment type="subunit">
    <text evidence="1">Homodimer.</text>
</comment>
<comment type="subcellular location">
    <subcellularLocation>
        <location evidence="1">Cytoplasm</location>
    </subcellularLocation>
</comment>
<comment type="similarity">
    <text evidence="1">Belongs to the RNA methyltransferase RlmH family.</text>
</comment>